<organism>
    <name type="scientific">Streptomyces lividans</name>
    <dbReference type="NCBI Taxonomy" id="1916"/>
    <lineage>
        <taxon>Bacteria</taxon>
        <taxon>Bacillati</taxon>
        <taxon>Actinomycetota</taxon>
        <taxon>Actinomycetes</taxon>
        <taxon>Kitasatosporales</taxon>
        <taxon>Streptomycetaceae</taxon>
        <taxon>Streptomyces</taxon>
    </lineage>
</organism>
<name>KAD_STRLI</name>
<feature type="chain" id="PRO_0000158858" description="Adenylate kinase">
    <location>
        <begin position="1"/>
        <end position="200" status="greater than"/>
    </location>
</feature>
<feature type="region of interest" description="NMP" evidence="1">
    <location>
        <begin position="30"/>
        <end position="59"/>
    </location>
</feature>
<feature type="region of interest" description="LID" evidence="1">
    <location>
        <begin position="125"/>
        <end position="163"/>
    </location>
</feature>
<feature type="binding site" evidence="1">
    <location>
        <begin position="10"/>
        <end position="15"/>
    </location>
    <ligand>
        <name>ATP</name>
        <dbReference type="ChEBI" id="CHEBI:30616"/>
    </ligand>
</feature>
<feature type="binding site" evidence="1">
    <location>
        <position position="31"/>
    </location>
    <ligand>
        <name>AMP</name>
        <dbReference type="ChEBI" id="CHEBI:456215"/>
    </ligand>
</feature>
<feature type="binding site" evidence="1">
    <location>
        <position position="36"/>
    </location>
    <ligand>
        <name>AMP</name>
        <dbReference type="ChEBI" id="CHEBI:456215"/>
    </ligand>
</feature>
<feature type="binding site" evidence="1">
    <location>
        <begin position="57"/>
        <end position="59"/>
    </location>
    <ligand>
        <name>AMP</name>
        <dbReference type="ChEBI" id="CHEBI:456215"/>
    </ligand>
</feature>
<feature type="binding site" evidence="1">
    <location>
        <begin position="84"/>
        <end position="87"/>
    </location>
    <ligand>
        <name>AMP</name>
        <dbReference type="ChEBI" id="CHEBI:456215"/>
    </ligand>
</feature>
<feature type="binding site" evidence="1">
    <location>
        <position position="91"/>
    </location>
    <ligand>
        <name>AMP</name>
        <dbReference type="ChEBI" id="CHEBI:456215"/>
    </ligand>
</feature>
<feature type="binding site" evidence="1">
    <location>
        <position position="126"/>
    </location>
    <ligand>
        <name>ATP</name>
        <dbReference type="ChEBI" id="CHEBI:30616"/>
    </ligand>
</feature>
<feature type="binding site" evidence="1">
    <location>
        <begin position="136"/>
        <end position="137"/>
    </location>
    <ligand>
        <name>ATP</name>
        <dbReference type="ChEBI" id="CHEBI:30616"/>
    </ligand>
</feature>
<feature type="binding site" evidence="1">
    <location>
        <position position="160"/>
    </location>
    <ligand>
        <name>AMP</name>
        <dbReference type="ChEBI" id="CHEBI:456215"/>
    </ligand>
</feature>
<feature type="binding site" evidence="1">
    <location>
        <position position="171"/>
    </location>
    <ligand>
        <name>AMP</name>
        <dbReference type="ChEBI" id="CHEBI:456215"/>
    </ligand>
</feature>
<feature type="non-terminal residue">
    <location>
        <position position="200"/>
    </location>
</feature>
<gene>
    <name evidence="1" type="primary">adk</name>
</gene>
<proteinExistence type="inferred from homology"/>
<dbReference type="EC" id="2.7.4.3" evidence="1"/>
<dbReference type="EMBL" id="U27324">
    <property type="protein sequence ID" value="AAC44591.1"/>
    <property type="molecule type" value="Genomic_DNA"/>
</dbReference>
<dbReference type="PIR" id="PC4230">
    <property type="entry name" value="PC4230"/>
</dbReference>
<dbReference type="SMR" id="P49974"/>
<dbReference type="UniPathway" id="UPA00588">
    <property type="reaction ID" value="UER00649"/>
</dbReference>
<dbReference type="GO" id="GO:0005737">
    <property type="term" value="C:cytoplasm"/>
    <property type="evidence" value="ECO:0007669"/>
    <property type="project" value="UniProtKB-SubCell"/>
</dbReference>
<dbReference type="GO" id="GO:0004017">
    <property type="term" value="F:adenylate kinase activity"/>
    <property type="evidence" value="ECO:0007669"/>
    <property type="project" value="UniProtKB-EC"/>
</dbReference>
<dbReference type="GO" id="GO:0005524">
    <property type="term" value="F:ATP binding"/>
    <property type="evidence" value="ECO:0007669"/>
    <property type="project" value="UniProtKB-KW"/>
</dbReference>
<dbReference type="GO" id="GO:0044209">
    <property type="term" value="P:AMP salvage"/>
    <property type="evidence" value="ECO:0007669"/>
    <property type="project" value="UniProtKB-UniPathway"/>
</dbReference>
<dbReference type="CDD" id="cd01428">
    <property type="entry name" value="ADK"/>
    <property type="match status" value="1"/>
</dbReference>
<dbReference type="FunFam" id="3.40.50.300:FF:000106">
    <property type="entry name" value="Adenylate kinase mitochondrial"/>
    <property type="match status" value="1"/>
</dbReference>
<dbReference type="Gene3D" id="3.40.50.300">
    <property type="entry name" value="P-loop containing nucleotide triphosphate hydrolases"/>
    <property type="match status" value="1"/>
</dbReference>
<dbReference type="HAMAP" id="MF_00235">
    <property type="entry name" value="Adenylate_kinase_Adk"/>
    <property type="match status" value="1"/>
</dbReference>
<dbReference type="InterPro" id="IPR006259">
    <property type="entry name" value="Adenyl_kin_sub"/>
</dbReference>
<dbReference type="InterPro" id="IPR000850">
    <property type="entry name" value="Adenylat/UMP-CMP_kin"/>
</dbReference>
<dbReference type="InterPro" id="IPR033690">
    <property type="entry name" value="Adenylat_kinase_CS"/>
</dbReference>
<dbReference type="InterPro" id="IPR007862">
    <property type="entry name" value="Adenylate_kinase_lid-dom"/>
</dbReference>
<dbReference type="InterPro" id="IPR027417">
    <property type="entry name" value="P-loop_NTPase"/>
</dbReference>
<dbReference type="NCBIfam" id="TIGR01351">
    <property type="entry name" value="adk"/>
    <property type="match status" value="1"/>
</dbReference>
<dbReference type="NCBIfam" id="NF001380">
    <property type="entry name" value="PRK00279.1-2"/>
    <property type="match status" value="1"/>
</dbReference>
<dbReference type="NCBIfam" id="NF001381">
    <property type="entry name" value="PRK00279.1-3"/>
    <property type="match status" value="1"/>
</dbReference>
<dbReference type="NCBIfam" id="NF011100">
    <property type="entry name" value="PRK14527.1"/>
    <property type="match status" value="1"/>
</dbReference>
<dbReference type="PANTHER" id="PTHR23359">
    <property type="entry name" value="NUCLEOTIDE KINASE"/>
    <property type="match status" value="1"/>
</dbReference>
<dbReference type="Pfam" id="PF00406">
    <property type="entry name" value="ADK"/>
    <property type="match status" value="1"/>
</dbReference>
<dbReference type="Pfam" id="PF05191">
    <property type="entry name" value="ADK_lid"/>
    <property type="match status" value="1"/>
</dbReference>
<dbReference type="PRINTS" id="PR00094">
    <property type="entry name" value="ADENYLTKNASE"/>
</dbReference>
<dbReference type="SUPFAM" id="SSF52540">
    <property type="entry name" value="P-loop containing nucleoside triphosphate hydrolases"/>
    <property type="match status" value="1"/>
</dbReference>
<dbReference type="PROSITE" id="PS00113">
    <property type="entry name" value="ADENYLATE_KINASE"/>
    <property type="match status" value="1"/>
</dbReference>
<sequence length="200" mass="22023">MRIVLVGPPGAGKGTQATRLAETLHIPHISTGDLFRANISQQTELGKLAKSYMDAGNLVPDEVTIAMDRTAWSSPTPRAFLLDGFPRNVSQAEALDELLETEDMKLDAVLDLEAPEDEVVKRIAGRRVCRNDSAHVFHVTYTPPKKEGVCDVCGGELYQRDDDSEETVRKRLEVYHTQTEPIIDYYKSQGLVATIAATGP</sequence>
<keyword id="KW-0067">ATP-binding</keyword>
<keyword id="KW-0963">Cytoplasm</keyword>
<keyword id="KW-0418">Kinase</keyword>
<keyword id="KW-0545">Nucleotide biosynthesis</keyword>
<keyword id="KW-0547">Nucleotide-binding</keyword>
<keyword id="KW-0808">Transferase</keyword>
<comment type="function">
    <text evidence="1">Catalyzes the reversible transfer of the terminal phosphate group between ATP and AMP. Plays an important role in cellular energy homeostasis and in adenine nucleotide metabolism.</text>
</comment>
<comment type="catalytic activity">
    <reaction evidence="1">
        <text>AMP + ATP = 2 ADP</text>
        <dbReference type="Rhea" id="RHEA:12973"/>
        <dbReference type="ChEBI" id="CHEBI:30616"/>
        <dbReference type="ChEBI" id="CHEBI:456215"/>
        <dbReference type="ChEBI" id="CHEBI:456216"/>
        <dbReference type="EC" id="2.7.4.3"/>
    </reaction>
</comment>
<comment type="pathway">
    <text evidence="1">Purine metabolism; AMP biosynthesis via salvage pathway; AMP from ADP: step 1/1.</text>
</comment>
<comment type="subunit">
    <text evidence="1">Monomer.</text>
</comment>
<comment type="subcellular location">
    <subcellularLocation>
        <location evidence="1">Cytoplasm</location>
    </subcellularLocation>
</comment>
<comment type="domain">
    <text evidence="1">Consists of three domains, a large central CORE domain and two small peripheral domains, NMPbind and LID, which undergo movements during catalysis. The LID domain closes over the site of phosphoryl transfer upon ATP binding. Assembling and dissambling the active center during each catalytic cycle provides an effective means to prevent ATP hydrolysis.</text>
</comment>
<comment type="similarity">
    <text evidence="1">Belongs to the adenylate kinase family.</text>
</comment>
<accession>P49974</accession>
<reference key="1">
    <citation type="journal article" date="1996" name="Gene">
        <title>Cloning and sequencing of the secY homolog from Streptomyces lividans 1326.</title>
        <authorList>
            <person name="Ostiguy S."/>
            <person name="Gilbert M."/>
            <person name="Shareck F."/>
            <person name="Kluepfel D."/>
            <person name="Morosoli R."/>
        </authorList>
    </citation>
    <scope>NUCLEOTIDE SEQUENCE [GENOMIC DNA]</scope>
    <source>
        <strain>66 / 1326</strain>
    </source>
</reference>
<protein>
    <recommendedName>
        <fullName evidence="1">Adenylate kinase</fullName>
        <shortName evidence="1">AK</shortName>
        <ecNumber evidence="1">2.7.4.3</ecNumber>
    </recommendedName>
    <alternativeName>
        <fullName evidence="1">ATP-AMP transphosphorylase</fullName>
    </alternativeName>
    <alternativeName>
        <fullName evidence="1">ATP:AMP phosphotransferase</fullName>
    </alternativeName>
    <alternativeName>
        <fullName evidence="1">Adenylate monophosphate kinase</fullName>
    </alternativeName>
</protein>
<evidence type="ECO:0000255" key="1">
    <source>
        <dbReference type="HAMAP-Rule" id="MF_00235"/>
    </source>
</evidence>